<keyword id="KW-0067">ATP-binding</keyword>
<keyword id="KW-0173">Coenzyme A biosynthesis</keyword>
<keyword id="KW-0963">Cytoplasm</keyword>
<keyword id="KW-0418">Kinase</keyword>
<keyword id="KW-0547">Nucleotide-binding</keyword>
<keyword id="KW-1185">Reference proteome</keyword>
<keyword id="KW-0808">Transferase</keyword>
<name>COAE_THEVB</name>
<sequence length="203" mass="22346">MSRLLRLGITGGIACGKSVVAGYLQRQYGVPIVDADVLARQVVAVGTPIYQAIVDRYGDGICRRDGTLDRSRLGEIVFAQPQERQWLEAQIHPAVVAEMEQAMATCDQPLMALVIPLLFEAHLEGLVDHIWVVATPPEQQLARLQQRDRLSAHAAGQRLASQLPLEEKIRRADTVLWNTGSLEELYRQVDQAFSLLGRGGKGG</sequence>
<proteinExistence type="inferred from homology"/>
<organism>
    <name type="scientific">Thermosynechococcus vestitus (strain NIES-2133 / IAM M-273 / BP-1)</name>
    <dbReference type="NCBI Taxonomy" id="197221"/>
    <lineage>
        <taxon>Bacteria</taxon>
        <taxon>Bacillati</taxon>
        <taxon>Cyanobacteriota</taxon>
        <taxon>Cyanophyceae</taxon>
        <taxon>Acaryochloridales</taxon>
        <taxon>Thermosynechococcaceae</taxon>
        <taxon>Thermosynechococcus</taxon>
    </lineage>
</organism>
<evidence type="ECO:0000255" key="1">
    <source>
        <dbReference type="HAMAP-Rule" id="MF_00376"/>
    </source>
</evidence>
<gene>
    <name evidence="1" type="primary">coaE</name>
    <name type="ordered locus">tlr0898</name>
</gene>
<comment type="function">
    <text evidence="1">Catalyzes the phosphorylation of the 3'-hydroxyl group of dephosphocoenzyme A to form coenzyme A.</text>
</comment>
<comment type="catalytic activity">
    <reaction evidence="1">
        <text>3'-dephospho-CoA + ATP = ADP + CoA + H(+)</text>
        <dbReference type="Rhea" id="RHEA:18245"/>
        <dbReference type="ChEBI" id="CHEBI:15378"/>
        <dbReference type="ChEBI" id="CHEBI:30616"/>
        <dbReference type="ChEBI" id="CHEBI:57287"/>
        <dbReference type="ChEBI" id="CHEBI:57328"/>
        <dbReference type="ChEBI" id="CHEBI:456216"/>
        <dbReference type="EC" id="2.7.1.24"/>
    </reaction>
</comment>
<comment type="pathway">
    <text evidence="1">Cofactor biosynthesis; coenzyme A biosynthesis; CoA from (R)-pantothenate: step 5/5.</text>
</comment>
<comment type="subcellular location">
    <subcellularLocation>
        <location evidence="1">Cytoplasm</location>
    </subcellularLocation>
</comment>
<comment type="similarity">
    <text evidence="1">Belongs to the CoaE family.</text>
</comment>
<reference key="1">
    <citation type="journal article" date="2002" name="DNA Res.">
        <title>Complete genome structure of the thermophilic cyanobacterium Thermosynechococcus elongatus BP-1.</title>
        <authorList>
            <person name="Nakamura Y."/>
            <person name="Kaneko T."/>
            <person name="Sato S."/>
            <person name="Ikeuchi M."/>
            <person name="Katoh H."/>
            <person name="Sasamoto S."/>
            <person name="Watanabe A."/>
            <person name="Iriguchi M."/>
            <person name="Kawashima K."/>
            <person name="Kimura T."/>
            <person name="Kishida Y."/>
            <person name="Kiyokawa C."/>
            <person name="Kohara M."/>
            <person name="Matsumoto M."/>
            <person name="Matsuno A."/>
            <person name="Nakazaki N."/>
            <person name="Shimpo S."/>
            <person name="Sugimoto M."/>
            <person name="Takeuchi C."/>
            <person name="Yamada M."/>
            <person name="Tabata S."/>
        </authorList>
    </citation>
    <scope>NUCLEOTIDE SEQUENCE [LARGE SCALE GENOMIC DNA]</scope>
    <source>
        <strain>NIES-2133 / IAM M-273 / BP-1</strain>
    </source>
</reference>
<accession>Q8DKG1</accession>
<dbReference type="EC" id="2.7.1.24" evidence="1"/>
<dbReference type="EMBL" id="BA000039">
    <property type="protein sequence ID" value="BAC08450.1"/>
    <property type="molecule type" value="Genomic_DNA"/>
</dbReference>
<dbReference type="RefSeq" id="NP_681688.1">
    <property type="nucleotide sequence ID" value="NC_004113.1"/>
</dbReference>
<dbReference type="RefSeq" id="WP_011056742.1">
    <property type="nucleotide sequence ID" value="NC_004113.1"/>
</dbReference>
<dbReference type="SMR" id="Q8DKG1"/>
<dbReference type="STRING" id="197221.gene:10747490"/>
<dbReference type="EnsemblBacteria" id="BAC08450">
    <property type="protein sequence ID" value="BAC08450"/>
    <property type="gene ID" value="BAC08450"/>
</dbReference>
<dbReference type="KEGG" id="tel:tlr0898"/>
<dbReference type="eggNOG" id="COG0237">
    <property type="taxonomic scope" value="Bacteria"/>
</dbReference>
<dbReference type="UniPathway" id="UPA00241">
    <property type="reaction ID" value="UER00356"/>
</dbReference>
<dbReference type="Proteomes" id="UP000000440">
    <property type="component" value="Chromosome"/>
</dbReference>
<dbReference type="GO" id="GO:0005737">
    <property type="term" value="C:cytoplasm"/>
    <property type="evidence" value="ECO:0007669"/>
    <property type="project" value="UniProtKB-SubCell"/>
</dbReference>
<dbReference type="GO" id="GO:0005524">
    <property type="term" value="F:ATP binding"/>
    <property type="evidence" value="ECO:0007669"/>
    <property type="project" value="UniProtKB-UniRule"/>
</dbReference>
<dbReference type="GO" id="GO:0004140">
    <property type="term" value="F:dephospho-CoA kinase activity"/>
    <property type="evidence" value="ECO:0007669"/>
    <property type="project" value="UniProtKB-UniRule"/>
</dbReference>
<dbReference type="GO" id="GO:0015937">
    <property type="term" value="P:coenzyme A biosynthetic process"/>
    <property type="evidence" value="ECO:0007669"/>
    <property type="project" value="UniProtKB-UniRule"/>
</dbReference>
<dbReference type="CDD" id="cd02022">
    <property type="entry name" value="DPCK"/>
    <property type="match status" value="1"/>
</dbReference>
<dbReference type="Gene3D" id="3.40.50.300">
    <property type="entry name" value="P-loop containing nucleotide triphosphate hydrolases"/>
    <property type="match status" value="1"/>
</dbReference>
<dbReference type="HAMAP" id="MF_00376">
    <property type="entry name" value="Dephospho_CoA_kinase"/>
    <property type="match status" value="1"/>
</dbReference>
<dbReference type="InterPro" id="IPR001977">
    <property type="entry name" value="Depp_CoAkinase"/>
</dbReference>
<dbReference type="InterPro" id="IPR027417">
    <property type="entry name" value="P-loop_NTPase"/>
</dbReference>
<dbReference type="NCBIfam" id="TIGR00152">
    <property type="entry name" value="dephospho-CoA kinase"/>
    <property type="match status" value="1"/>
</dbReference>
<dbReference type="PANTHER" id="PTHR10695:SF46">
    <property type="entry name" value="BIFUNCTIONAL COENZYME A SYNTHASE-RELATED"/>
    <property type="match status" value="1"/>
</dbReference>
<dbReference type="PANTHER" id="PTHR10695">
    <property type="entry name" value="DEPHOSPHO-COA KINASE-RELATED"/>
    <property type="match status" value="1"/>
</dbReference>
<dbReference type="Pfam" id="PF01121">
    <property type="entry name" value="CoaE"/>
    <property type="match status" value="1"/>
</dbReference>
<dbReference type="SUPFAM" id="SSF52540">
    <property type="entry name" value="P-loop containing nucleoside triphosphate hydrolases"/>
    <property type="match status" value="1"/>
</dbReference>
<dbReference type="PROSITE" id="PS51219">
    <property type="entry name" value="DPCK"/>
    <property type="match status" value="1"/>
</dbReference>
<protein>
    <recommendedName>
        <fullName evidence="1">Dephospho-CoA kinase</fullName>
        <ecNumber evidence="1">2.7.1.24</ecNumber>
    </recommendedName>
    <alternativeName>
        <fullName evidence="1">Dephosphocoenzyme A kinase</fullName>
    </alternativeName>
</protein>
<feature type="chain" id="PRO_0000173018" description="Dephospho-CoA kinase">
    <location>
        <begin position="1"/>
        <end position="203"/>
    </location>
</feature>
<feature type="domain" description="DPCK" evidence="1">
    <location>
        <begin position="6"/>
        <end position="203"/>
    </location>
</feature>
<feature type="binding site" evidence="1">
    <location>
        <begin position="14"/>
        <end position="19"/>
    </location>
    <ligand>
        <name>ATP</name>
        <dbReference type="ChEBI" id="CHEBI:30616"/>
    </ligand>
</feature>